<sequence length="13" mass="1566">QSFGNQWARGHFM</sequence>
<keyword id="KW-0027">Amidation</keyword>
<keyword id="KW-0878">Amphibian defense peptide</keyword>
<keyword id="KW-0903">Direct protein sequencing</keyword>
<keyword id="KW-0873">Pyrrolidone carboxylic acid</keyword>
<keyword id="KW-0964">Secreted</keyword>
<comment type="function">
    <text evidence="2">Possesses insulin-releasing activity.</text>
</comment>
<comment type="subcellular location">
    <subcellularLocation>
        <location evidence="2">Secreted</location>
    </subcellularLocation>
</comment>
<comment type="tissue specificity">
    <text evidence="2">Expressed by the skin glands.</text>
</comment>
<comment type="mass spectrometry" mass="1662.6" method="Electrospray" evidence="2"/>
<comment type="similarity">
    <text evidence="3">Belongs to the bombesin/neuromedin-B/ranatensin family.</text>
</comment>
<accession>P84211</accession>
<dbReference type="GO" id="GO:0005576">
    <property type="term" value="C:extracellular region"/>
    <property type="evidence" value="ECO:0000314"/>
    <property type="project" value="UniProtKB"/>
</dbReference>
<dbReference type="GO" id="GO:0005179">
    <property type="term" value="F:hormone activity"/>
    <property type="evidence" value="ECO:0000304"/>
    <property type="project" value="UniProtKB"/>
</dbReference>
<dbReference type="GO" id="GO:0006952">
    <property type="term" value="P:defense response"/>
    <property type="evidence" value="ECO:0000304"/>
    <property type="project" value="UniProtKB"/>
</dbReference>
<dbReference type="GO" id="GO:0007218">
    <property type="term" value="P:neuropeptide signaling pathway"/>
    <property type="evidence" value="ECO:0007669"/>
    <property type="project" value="InterPro"/>
</dbReference>
<dbReference type="GO" id="GO:0050796">
    <property type="term" value="P:regulation of insulin secretion"/>
    <property type="evidence" value="ECO:0000314"/>
    <property type="project" value="UniProtKB"/>
</dbReference>
<dbReference type="InterPro" id="IPR000874">
    <property type="entry name" value="Bombesin"/>
</dbReference>
<dbReference type="Pfam" id="PF02044">
    <property type="entry name" value="Bombesin"/>
    <property type="match status" value="1"/>
</dbReference>
<dbReference type="PROSITE" id="PS00257">
    <property type="entry name" value="BOMBESIN"/>
    <property type="match status" value="1"/>
</dbReference>
<protein>
    <recommendedName>
        <fullName>Bombesin-like peptide 2</fullName>
    </recommendedName>
</protein>
<evidence type="ECO:0000250" key="1">
    <source>
        <dbReference type="UniProtKB" id="P84213"/>
    </source>
</evidence>
<evidence type="ECO:0000269" key="2">
    <source>
    </source>
</evidence>
<evidence type="ECO:0000305" key="3"/>
<name>BOML2_BOMVA</name>
<organism>
    <name type="scientific">Bombina variegata</name>
    <name type="common">Yellow-bellied toad</name>
    <dbReference type="NCBI Taxonomy" id="8348"/>
    <lineage>
        <taxon>Eukaryota</taxon>
        <taxon>Metazoa</taxon>
        <taxon>Chordata</taxon>
        <taxon>Craniata</taxon>
        <taxon>Vertebrata</taxon>
        <taxon>Euteleostomi</taxon>
        <taxon>Amphibia</taxon>
        <taxon>Batrachia</taxon>
        <taxon>Anura</taxon>
        <taxon>Bombinatoridae</taxon>
        <taxon>Bombina</taxon>
    </lineage>
</organism>
<reference evidence="3" key="1">
    <citation type="journal article" date="2004" name="Biol. Chem.">
        <title>Skin secretion of the toad Bombina variegata contains multiple insulin-releasing peptides including bombesin and entirely novel insulinotropic structures.</title>
        <authorList>
            <person name="Marenah L."/>
            <person name="Flatt P.R."/>
            <person name="Orr D.F."/>
            <person name="McClean S."/>
            <person name="Shaw C."/>
            <person name="Abdel-Wahab Y.H."/>
        </authorList>
    </citation>
    <scope>PROTEIN SEQUENCE</scope>
    <scope>FUNCTION</scope>
    <scope>SUBCELLULAR LOCATION</scope>
    <scope>TISSUE SPECIFICITY</scope>
    <scope>MASS SPECTROMETRY</scope>
    <source>
        <tissue evidence="2">Skin secretion</tissue>
    </source>
</reference>
<proteinExistence type="evidence at protein level"/>
<feature type="peptide" id="PRO_0000043490" description="Bombesin-like peptide 2">
    <location>
        <begin position="1"/>
        <end position="13"/>
    </location>
</feature>
<feature type="modified residue" description="Pyrrolidone carboxylic acid" evidence="1">
    <location>
        <position position="1"/>
    </location>
</feature>
<feature type="modified residue" description="Methionine amide" evidence="1">
    <location>
        <position position="13"/>
    </location>
</feature>